<protein>
    <recommendedName>
        <fullName evidence="1">Cytidine deaminase</fullName>
        <ecNumber evidence="1">3.5.4.5</ecNumber>
    </recommendedName>
    <alternativeName>
        <fullName evidence="1">Cytidine aminohydrolase</fullName>
        <shortName evidence="1">CDA</shortName>
    </alternativeName>
</protein>
<accession>Q7N6K3</accession>
<evidence type="ECO:0000255" key="1">
    <source>
        <dbReference type="HAMAP-Rule" id="MF_01558"/>
    </source>
</evidence>
<evidence type="ECO:0000255" key="2">
    <source>
        <dbReference type="PROSITE-ProRule" id="PRU01083"/>
    </source>
</evidence>
<organism>
    <name type="scientific">Photorhabdus laumondii subsp. laumondii (strain DSM 15139 / CIP 105565 / TT01)</name>
    <name type="common">Photorhabdus luminescens subsp. laumondii</name>
    <dbReference type="NCBI Taxonomy" id="243265"/>
    <lineage>
        <taxon>Bacteria</taxon>
        <taxon>Pseudomonadati</taxon>
        <taxon>Pseudomonadota</taxon>
        <taxon>Gammaproteobacteria</taxon>
        <taxon>Enterobacterales</taxon>
        <taxon>Morganellaceae</taxon>
        <taxon>Photorhabdus</taxon>
    </lineage>
</organism>
<name>CDD_PHOLL</name>
<proteinExistence type="inferred from homology"/>
<sequence>MQARFHPIWVQLPSKLQDALLPYAGNDDFPAMLTAEQAKSIKKACGFDDNTLAVALLPLAAASSLTPISHFNVGAIARGESGNLYFGANMEFAGVPLQQTIHAEQCAITHAWLLGEKRLASVTVNYSPCGHCRQFMNELNSGTQLEIHLPKQASSTLDHYLPDSFGPNDLGITTLLMDPVNHGYKLETTDKLVLTALDAANQSYAPYSNSYSGTALLGKDGIIYPGRYAENAAFNPSLPPLQAALILMNISGGDCLAIERAVLVEGKHSDLSQRSATQSILAALGCSKFDYYTF</sequence>
<feature type="chain" id="PRO_0000171658" description="Cytidine deaminase">
    <location>
        <begin position="1"/>
        <end position="294"/>
    </location>
</feature>
<feature type="domain" description="CMP/dCMP-type deaminase 1" evidence="2">
    <location>
        <begin position="48"/>
        <end position="168"/>
    </location>
</feature>
<feature type="domain" description="CMP/dCMP-type deaminase 2" evidence="2">
    <location>
        <begin position="187"/>
        <end position="294"/>
    </location>
</feature>
<feature type="active site" description="Proton donor" evidence="1">
    <location>
        <position position="104"/>
    </location>
</feature>
<feature type="binding site" evidence="1">
    <location>
        <begin position="89"/>
        <end position="91"/>
    </location>
    <ligand>
        <name>substrate</name>
    </ligand>
</feature>
<feature type="binding site" evidence="1">
    <location>
        <position position="102"/>
    </location>
    <ligand>
        <name>Zn(2+)</name>
        <dbReference type="ChEBI" id="CHEBI:29105"/>
        <note>catalytic</note>
    </ligand>
</feature>
<feature type="binding site" evidence="1">
    <location>
        <position position="129"/>
    </location>
    <ligand>
        <name>Zn(2+)</name>
        <dbReference type="ChEBI" id="CHEBI:29105"/>
        <note>catalytic</note>
    </ligand>
</feature>
<feature type="binding site" evidence="1">
    <location>
        <position position="132"/>
    </location>
    <ligand>
        <name>Zn(2+)</name>
        <dbReference type="ChEBI" id="CHEBI:29105"/>
        <note>catalytic</note>
    </ligand>
</feature>
<dbReference type="EC" id="3.5.4.5" evidence="1"/>
<dbReference type="EMBL" id="BX571864">
    <property type="protein sequence ID" value="CAE13840.1"/>
    <property type="molecule type" value="Genomic_DNA"/>
</dbReference>
<dbReference type="RefSeq" id="WP_011145844.1">
    <property type="nucleotide sequence ID" value="NC_005126.1"/>
</dbReference>
<dbReference type="SMR" id="Q7N6K3"/>
<dbReference type="STRING" id="243265.plu1547"/>
<dbReference type="GeneID" id="48847835"/>
<dbReference type="KEGG" id="plu:plu1547"/>
<dbReference type="eggNOG" id="COG0295">
    <property type="taxonomic scope" value="Bacteria"/>
</dbReference>
<dbReference type="HOGENOM" id="CLU_052424_0_0_6"/>
<dbReference type="OrthoDB" id="9795347at2"/>
<dbReference type="Proteomes" id="UP000002514">
    <property type="component" value="Chromosome"/>
</dbReference>
<dbReference type="GO" id="GO:0005829">
    <property type="term" value="C:cytosol"/>
    <property type="evidence" value="ECO:0007669"/>
    <property type="project" value="TreeGrafter"/>
</dbReference>
<dbReference type="GO" id="GO:0004126">
    <property type="term" value="F:cytidine deaminase activity"/>
    <property type="evidence" value="ECO:0007669"/>
    <property type="project" value="UniProtKB-UniRule"/>
</dbReference>
<dbReference type="GO" id="GO:0042802">
    <property type="term" value="F:identical protein binding"/>
    <property type="evidence" value="ECO:0007669"/>
    <property type="project" value="UniProtKB-ARBA"/>
</dbReference>
<dbReference type="GO" id="GO:0008270">
    <property type="term" value="F:zinc ion binding"/>
    <property type="evidence" value="ECO:0007669"/>
    <property type="project" value="UniProtKB-UniRule"/>
</dbReference>
<dbReference type="GO" id="GO:0009972">
    <property type="term" value="P:cytidine deamination"/>
    <property type="evidence" value="ECO:0007669"/>
    <property type="project" value="InterPro"/>
</dbReference>
<dbReference type="CDD" id="cd01283">
    <property type="entry name" value="cytidine_deaminase"/>
    <property type="match status" value="2"/>
</dbReference>
<dbReference type="FunFam" id="3.40.140.10:FF:000007">
    <property type="entry name" value="Cytidine deaminase"/>
    <property type="match status" value="1"/>
</dbReference>
<dbReference type="Gene3D" id="3.40.140.10">
    <property type="entry name" value="Cytidine Deaminase, domain 2"/>
    <property type="match status" value="2"/>
</dbReference>
<dbReference type="HAMAP" id="MF_01558">
    <property type="entry name" value="Cyt_deam"/>
    <property type="match status" value="1"/>
</dbReference>
<dbReference type="InterPro" id="IPR016192">
    <property type="entry name" value="APOBEC/CMP_deaminase_Zn-bd"/>
</dbReference>
<dbReference type="InterPro" id="IPR002125">
    <property type="entry name" value="CMP_dCMP_dom"/>
</dbReference>
<dbReference type="InterPro" id="IPR013171">
    <property type="entry name" value="Cyd/dCyd_deaminase_Zn-bd"/>
</dbReference>
<dbReference type="InterPro" id="IPR050202">
    <property type="entry name" value="Cyt/Deoxycyt_deaminase"/>
</dbReference>
<dbReference type="InterPro" id="IPR006263">
    <property type="entry name" value="Cyt_deam_dimer"/>
</dbReference>
<dbReference type="InterPro" id="IPR016193">
    <property type="entry name" value="Cytidine_deaminase-like"/>
</dbReference>
<dbReference type="InterPro" id="IPR020797">
    <property type="entry name" value="Cytidine_deaminase_bacteria"/>
</dbReference>
<dbReference type="NCBIfam" id="TIGR01355">
    <property type="entry name" value="cyt_deam_dimer"/>
    <property type="match status" value="1"/>
</dbReference>
<dbReference type="NCBIfam" id="NF006537">
    <property type="entry name" value="PRK09027.1"/>
    <property type="match status" value="1"/>
</dbReference>
<dbReference type="PANTHER" id="PTHR11644">
    <property type="entry name" value="CYTIDINE DEAMINASE"/>
    <property type="match status" value="1"/>
</dbReference>
<dbReference type="PANTHER" id="PTHR11644:SF2">
    <property type="entry name" value="CYTIDINE DEAMINASE"/>
    <property type="match status" value="1"/>
</dbReference>
<dbReference type="Pfam" id="PF00383">
    <property type="entry name" value="dCMP_cyt_deam_1"/>
    <property type="match status" value="1"/>
</dbReference>
<dbReference type="Pfam" id="PF08211">
    <property type="entry name" value="dCMP_cyt_deam_2"/>
    <property type="match status" value="1"/>
</dbReference>
<dbReference type="PIRSF" id="PIRSF006334">
    <property type="entry name" value="Cdd_plus_pseudo"/>
    <property type="match status" value="1"/>
</dbReference>
<dbReference type="SUPFAM" id="SSF53927">
    <property type="entry name" value="Cytidine deaminase-like"/>
    <property type="match status" value="2"/>
</dbReference>
<dbReference type="PROSITE" id="PS00903">
    <property type="entry name" value="CYT_DCMP_DEAMINASES_1"/>
    <property type="match status" value="1"/>
</dbReference>
<dbReference type="PROSITE" id="PS51747">
    <property type="entry name" value="CYT_DCMP_DEAMINASES_2"/>
    <property type="match status" value="2"/>
</dbReference>
<comment type="function">
    <text evidence="1">This enzyme scavenges exogenous and endogenous cytidine and 2'-deoxycytidine for UMP synthesis.</text>
</comment>
<comment type="catalytic activity">
    <reaction evidence="1">
        <text>cytidine + H2O + H(+) = uridine + NH4(+)</text>
        <dbReference type="Rhea" id="RHEA:16069"/>
        <dbReference type="ChEBI" id="CHEBI:15377"/>
        <dbReference type="ChEBI" id="CHEBI:15378"/>
        <dbReference type="ChEBI" id="CHEBI:16704"/>
        <dbReference type="ChEBI" id="CHEBI:17562"/>
        <dbReference type="ChEBI" id="CHEBI:28938"/>
        <dbReference type="EC" id="3.5.4.5"/>
    </reaction>
</comment>
<comment type="catalytic activity">
    <reaction evidence="1">
        <text>2'-deoxycytidine + H2O + H(+) = 2'-deoxyuridine + NH4(+)</text>
        <dbReference type="Rhea" id="RHEA:13433"/>
        <dbReference type="ChEBI" id="CHEBI:15377"/>
        <dbReference type="ChEBI" id="CHEBI:15378"/>
        <dbReference type="ChEBI" id="CHEBI:15698"/>
        <dbReference type="ChEBI" id="CHEBI:16450"/>
        <dbReference type="ChEBI" id="CHEBI:28938"/>
        <dbReference type="EC" id="3.5.4.5"/>
    </reaction>
</comment>
<comment type="cofactor">
    <cofactor evidence="1">
        <name>Zn(2+)</name>
        <dbReference type="ChEBI" id="CHEBI:29105"/>
    </cofactor>
    <text evidence="1">Binds 1 zinc ion.</text>
</comment>
<comment type="subunit">
    <text evidence="1">Homodimer.</text>
</comment>
<comment type="similarity">
    <text evidence="1">Belongs to the cytidine and deoxycytidylate deaminase family.</text>
</comment>
<gene>
    <name evidence="1" type="primary">cdd</name>
    <name type="ordered locus">plu1547</name>
</gene>
<reference key="1">
    <citation type="journal article" date="2003" name="Nat. Biotechnol.">
        <title>The genome sequence of the entomopathogenic bacterium Photorhabdus luminescens.</title>
        <authorList>
            <person name="Duchaud E."/>
            <person name="Rusniok C."/>
            <person name="Frangeul L."/>
            <person name="Buchrieser C."/>
            <person name="Givaudan A."/>
            <person name="Taourit S."/>
            <person name="Bocs S."/>
            <person name="Boursaux-Eude C."/>
            <person name="Chandler M."/>
            <person name="Charles J.-F."/>
            <person name="Dassa E."/>
            <person name="Derose R."/>
            <person name="Derzelle S."/>
            <person name="Freyssinet G."/>
            <person name="Gaudriault S."/>
            <person name="Medigue C."/>
            <person name="Lanois A."/>
            <person name="Powell K."/>
            <person name="Siguier P."/>
            <person name="Vincent R."/>
            <person name="Wingate V."/>
            <person name="Zouine M."/>
            <person name="Glaser P."/>
            <person name="Boemare N."/>
            <person name="Danchin A."/>
            <person name="Kunst F."/>
        </authorList>
    </citation>
    <scope>NUCLEOTIDE SEQUENCE [LARGE SCALE GENOMIC DNA]</scope>
    <source>
        <strain>DSM 15139 / CIP 105565 / TT01</strain>
    </source>
</reference>
<keyword id="KW-0378">Hydrolase</keyword>
<keyword id="KW-0479">Metal-binding</keyword>
<keyword id="KW-1185">Reference proteome</keyword>
<keyword id="KW-0862">Zinc</keyword>